<feature type="chain" id="PRO_0000305036" description="Equilibrative nucleobase transporter 1">
    <location>
        <begin position="1"/>
        <end position="491"/>
    </location>
</feature>
<feature type="transmembrane region" description="Helical" evidence="2">
    <location>
        <begin position="17"/>
        <end position="37"/>
    </location>
</feature>
<feature type="transmembrane region" description="Helical" evidence="2">
    <location>
        <begin position="72"/>
        <end position="92"/>
    </location>
</feature>
<feature type="transmembrane region" description="Helical" evidence="2">
    <location>
        <begin position="102"/>
        <end position="122"/>
    </location>
</feature>
<feature type="transmembrane region" description="Helical" evidence="2">
    <location>
        <begin position="123"/>
        <end position="143"/>
    </location>
</feature>
<feature type="transmembrane region" description="Helical" evidence="2">
    <location>
        <begin position="156"/>
        <end position="176"/>
    </location>
</feature>
<feature type="transmembrane region" description="Helical" evidence="2">
    <location>
        <begin position="188"/>
        <end position="208"/>
    </location>
</feature>
<feature type="transmembrane region" description="Helical" evidence="2">
    <location>
        <begin position="279"/>
        <end position="299"/>
    </location>
</feature>
<feature type="transmembrane region" description="Helical" evidence="2">
    <location>
        <begin position="319"/>
        <end position="339"/>
    </location>
</feature>
<feature type="transmembrane region" description="Helical" evidence="2">
    <location>
        <begin position="356"/>
        <end position="376"/>
    </location>
</feature>
<feature type="transmembrane region" description="Helical" evidence="2">
    <location>
        <begin position="396"/>
        <end position="418"/>
    </location>
</feature>
<feature type="transmembrane region" description="Helical" evidence="2">
    <location>
        <begin position="427"/>
        <end position="447"/>
    </location>
</feature>
<feature type="transmembrane region" description="Helical" evidence="2">
    <location>
        <begin position="456"/>
        <end position="476"/>
    </location>
</feature>
<feature type="modified residue" description="Phosphoserine" evidence="15">
    <location>
        <position position="253"/>
    </location>
</feature>
<feature type="modified residue" description="Phosphothreonine" evidence="13 14 15">
    <location>
        <position position="258"/>
    </location>
</feature>
<feature type="glycosylation site" description="N-linked (GlcNAc...) asparagine" evidence="2">
    <location>
        <position position="56"/>
    </location>
</feature>
<feature type="glycosylation site" description="N-linked (GlcNAc...) asparagine" evidence="2">
    <location>
        <position position="220"/>
    </location>
</feature>
<feature type="glycosylation site" description="N-linked (GlcNAc...) asparagine" evidence="2">
    <location>
        <position position="229"/>
    </location>
</feature>
<feature type="splice variant" id="VSP_055620" description="In isoform 2." evidence="7">
    <original>A</original>
    <variation>AGRLGCMGDLFSTP</variation>
    <location>
        <position position="61"/>
    </location>
</feature>
<feature type="sequence variant" id="VAR_035156" description="In dbSNP:rs34799622.">
    <original>P</original>
    <variation>L</variation>
    <location>
        <position position="53"/>
    </location>
</feature>
<feature type="sequence conflict" description="In Ref. 2; BAG60330." evidence="10" ref="2">
    <original>V</original>
    <variation>A</variation>
    <location>
        <position position="172"/>
    </location>
</feature>
<feature type="sequence conflict" description="In Ref. 4; BAC11695." evidence="10" ref="4">
    <original>N</original>
    <variation>D</variation>
    <location>
        <position position="459"/>
    </location>
</feature>
<dbReference type="EMBL" id="AB028927">
    <property type="protein sequence ID" value="BAB82466.1"/>
    <property type="molecule type" value="mRNA"/>
</dbReference>
<dbReference type="EMBL" id="AK298028">
    <property type="protein sequence ID" value="BAG60330.1"/>
    <property type="molecule type" value="mRNA"/>
</dbReference>
<dbReference type="EMBL" id="CR457391">
    <property type="protein sequence ID" value="CAG33672.1"/>
    <property type="molecule type" value="mRNA"/>
</dbReference>
<dbReference type="EMBL" id="AK075552">
    <property type="protein sequence ID" value="BAC11695.1"/>
    <property type="molecule type" value="mRNA"/>
</dbReference>
<dbReference type="EMBL" id="AL157431">
    <property type="protein sequence ID" value="CAB75655.1"/>
    <property type="molecule type" value="mRNA"/>
</dbReference>
<dbReference type="EMBL" id="AP000781">
    <property type="status" value="NOT_ANNOTATED_CDS"/>
    <property type="molecule type" value="Genomic_DNA"/>
</dbReference>
<dbReference type="EMBL" id="CH471076">
    <property type="protein sequence ID" value="EAW73741.1"/>
    <property type="molecule type" value="Genomic_DNA"/>
</dbReference>
<dbReference type="EMBL" id="BC003163">
    <property type="protein sequence ID" value="AAH03163.1"/>
    <property type="molecule type" value="mRNA"/>
</dbReference>
<dbReference type="CCDS" id="CCDS60784.1">
    <molecule id="Q8NBI5-2"/>
</dbReference>
<dbReference type="CCDS" id="CCDS7956.1">
    <molecule id="Q8NBI5-1"/>
</dbReference>
<dbReference type="PIR" id="T46915">
    <property type="entry name" value="T46915"/>
</dbReference>
<dbReference type="RefSeq" id="NP_001265130.1">
    <molecule id="Q8NBI5-1"/>
    <property type="nucleotide sequence ID" value="NM_001278201.2"/>
</dbReference>
<dbReference type="RefSeq" id="NP_001265135.1">
    <molecule id="Q8NBI5-2"/>
    <property type="nucleotide sequence ID" value="NM_001278206.2"/>
</dbReference>
<dbReference type="RefSeq" id="NP_054815.2">
    <molecule id="Q8NBI5-1"/>
    <property type="nucleotide sequence ID" value="NM_014096.3"/>
</dbReference>
<dbReference type="RefSeq" id="NP_060081.1">
    <molecule id="Q8NBI5-1"/>
    <property type="nucleotide sequence ID" value="NM_017611.3"/>
</dbReference>
<dbReference type="RefSeq" id="NP_955361.1">
    <molecule id="Q8NBI5-1"/>
    <property type="nucleotide sequence ID" value="NM_199329.3"/>
</dbReference>
<dbReference type="BioGRID" id="118823">
    <property type="interactions" value="56"/>
</dbReference>
<dbReference type="FunCoup" id="Q8NBI5">
    <property type="interactions" value="328"/>
</dbReference>
<dbReference type="IntAct" id="Q8NBI5">
    <property type="interactions" value="38"/>
</dbReference>
<dbReference type="STRING" id="9606.ENSP00000434515"/>
<dbReference type="DrugBank" id="DB00993">
    <property type="generic name" value="Azathioprine"/>
</dbReference>
<dbReference type="TCDB" id="2.A.1.44.3">
    <property type="family name" value="the major facilitator superfamily (mfs)"/>
</dbReference>
<dbReference type="GlyCosmos" id="Q8NBI5">
    <property type="glycosylation" value="4 sites, 1 glycan"/>
</dbReference>
<dbReference type="GlyGen" id="Q8NBI5">
    <property type="glycosylation" value="4 sites, 2 N-linked glycans (1 site), 1 O-linked glycan (1 site)"/>
</dbReference>
<dbReference type="iPTMnet" id="Q8NBI5"/>
<dbReference type="PhosphoSitePlus" id="Q8NBI5"/>
<dbReference type="SwissPalm" id="Q8NBI5"/>
<dbReference type="BioMuta" id="SLC43A3"/>
<dbReference type="DMDM" id="158706361"/>
<dbReference type="jPOST" id="Q8NBI5"/>
<dbReference type="MassIVE" id="Q8NBI5"/>
<dbReference type="PaxDb" id="9606-ENSP00000434515"/>
<dbReference type="PeptideAtlas" id="Q8NBI5"/>
<dbReference type="ProteomicsDB" id="17547"/>
<dbReference type="ProteomicsDB" id="72772">
    <molecule id="Q8NBI5-1"/>
</dbReference>
<dbReference type="Pumba" id="Q8NBI5"/>
<dbReference type="Antibodypedia" id="14150">
    <property type="antibodies" value="70 antibodies from 17 providers"/>
</dbReference>
<dbReference type="DNASU" id="29015"/>
<dbReference type="Ensembl" id="ENST00000352187.5">
    <molecule id="Q8NBI5-1"/>
    <property type="protein sequence ID" value="ENSP00000337561.1"/>
    <property type="gene ID" value="ENSG00000134802.18"/>
</dbReference>
<dbReference type="Ensembl" id="ENST00000395123.6">
    <molecule id="Q8NBI5-1"/>
    <property type="protein sequence ID" value="ENSP00000378555.2"/>
    <property type="gene ID" value="ENSG00000134802.18"/>
</dbReference>
<dbReference type="Ensembl" id="ENST00000395124.6">
    <molecule id="Q8NBI5-1"/>
    <property type="protein sequence ID" value="ENSP00000378556.1"/>
    <property type="gene ID" value="ENSG00000134802.18"/>
</dbReference>
<dbReference type="Ensembl" id="ENST00000529554.5">
    <molecule id="Q8NBI5-1"/>
    <property type="protein sequence ID" value="ENSP00000436254.1"/>
    <property type="gene ID" value="ENSG00000134802.18"/>
</dbReference>
<dbReference type="Ensembl" id="ENST00000533524.5">
    <molecule id="Q8NBI5-2"/>
    <property type="protein sequence ID" value="ENSP00000434515.1"/>
    <property type="gene ID" value="ENSG00000134802.18"/>
</dbReference>
<dbReference type="GeneID" id="29015"/>
<dbReference type="KEGG" id="hsa:29015"/>
<dbReference type="MANE-Select" id="ENST00000395124.6">
    <property type="protein sequence ID" value="ENSP00000378556.1"/>
    <property type="RefSeq nucleotide sequence ID" value="NM_199329.3"/>
    <property type="RefSeq protein sequence ID" value="NP_955361.1"/>
</dbReference>
<dbReference type="UCSC" id="uc001nkg.5">
    <molecule id="Q8NBI5-1"/>
    <property type="organism name" value="human"/>
</dbReference>
<dbReference type="AGR" id="HGNC:17466"/>
<dbReference type="CTD" id="29015"/>
<dbReference type="DisGeNET" id="29015"/>
<dbReference type="GeneCards" id="SLC43A3"/>
<dbReference type="HGNC" id="HGNC:17466">
    <property type="gene designation" value="SLC43A3"/>
</dbReference>
<dbReference type="HPA" id="ENSG00000134802">
    <property type="expression patterns" value="Tissue enhanced (liver)"/>
</dbReference>
<dbReference type="MIM" id="618034">
    <property type="type" value="gene"/>
</dbReference>
<dbReference type="neXtProt" id="NX_Q8NBI5"/>
<dbReference type="OpenTargets" id="ENSG00000134802"/>
<dbReference type="PharmGKB" id="PA134924689"/>
<dbReference type="VEuPathDB" id="HostDB:ENSG00000134802"/>
<dbReference type="eggNOG" id="ENOG502QRYG">
    <property type="taxonomic scope" value="Eukaryota"/>
</dbReference>
<dbReference type="GeneTree" id="ENSGT00940000157622"/>
<dbReference type="HOGENOM" id="CLU_035676_1_1_1"/>
<dbReference type="InParanoid" id="Q8NBI5"/>
<dbReference type="OMA" id="CNILQQV"/>
<dbReference type="OrthoDB" id="330047at2759"/>
<dbReference type="PAN-GO" id="Q8NBI5">
    <property type="GO annotations" value="0 GO annotations based on evolutionary models"/>
</dbReference>
<dbReference type="PhylomeDB" id="Q8NBI5"/>
<dbReference type="TreeFam" id="TF328358"/>
<dbReference type="PathwayCommons" id="Q8NBI5"/>
<dbReference type="SignaLink" id="Q8NBI5"/>
<dbReference type="BioGRID-ORCS" id="29015">
    <property type="hits" value="22 hits in 1166 CRISPR screens"/>
</dbReference>
<dbReference type="ChiTaRS" id="SLC43A3">
    <property type="organism name" value="human"/>
</dbReference>
<dbReference type="GenomeRNAi" id="29015"/>
<dbReference type="Pharos" id="Q8NBI5">
    <property type="development level" value="Tbio"/>
</dbReference>
<dbReference type="PRO" id="PR:Q8NBI5"/>
<dbReference type="Proteomes" id="UP000005640">
    <property type="component" value="Chromosome 11"/>
</dbReference>
<dbReference type="RNAct" id="Q8NBI5">
    <property type="molecule type" value="protein"/>
</dbReference>
<dbReference type="Bgee" id="ENSG00000134802">
    <property type="expression patterns" value="Expressed in right lobe of liver and 165 other cell types or tissues"/>
</dbReference>
<dbReference type="ExpressionAtlas" id="Q8NBI5">
    <property type="expression patterns" value="baseline and differential"/>
</dbReference>
<dbReference type="GO" id="GO:0016323">
    <property type="term" value="C:basolateral plasma membrane"/>
    <property type="evidence" value="ECO:0000314"/>
    <property type="project" value="UniProtKB"/>
</dbReference>
<dbReference type="GO" id="GO:0015207">
    <property type="term" value="F:adenine transmembrane transporter activity"/>
    <property type="evidence" value="ECO:0000314"/>
    <property type="project" value="UniProtKB"/>
</dbReference>
<dbReference type="GO" id="GO:0015245">
    <property type="term" value="F:fatty acid transmembrane transporter activity"/>
    <property type="evidence" value="ECO:0000250"/>
    <property type="project" value="UniProtKB"/>
</dbReference>
<dbReference type="GO" id="GO:0015208">
    <property type="term" value="F:guanine transmembrane transporter activity"/>
    <property type="evidence" value="ECO:0000314"/>
    <property type="project" value="UniProtKB"/>
</dbReference>
<dbReference type="GO" id="GO:0042910">
    <property type="term" value="F:xenobiotic transmembrane transporter activity"/>
    <property type="evidence" value="ECO:0000314"/>
    <property type="project" value="UniProtKB"/>
</dbReference>
<dbReference type="GO" id="GO:0035344">
    <property type="term" value="P:hypoxanthine transport"/>
    <property type="evidence" value="ECO:0000314"/>
    <property type="project" value="UniProtKB"/>
</dbReference>
<dbReference type="Gene3D" id="1.20.1250.20">
    <property type="entry name" value="MFS general substrate transporter like domains"/>
    <property type="match status" value="1"/>
</dbReference>
<dbReference type="InterPro" id="IPR036259">
    <property type="entry name" value="MFS_trans_sf"/>
</dbReference>
<dbReference type="InterPro" id="IPR027197">
    <property type="entry name" value="SLC43A3"/>
</dbReference>
<dbReference type="PANTHER" id="PTHR20765:SF1">
    <property type="entry name" value="EQUILIBRATIVE NUCLEOBASE TRANSPORTER 1"/>
    <property type="match status" value="1"/>
</dbReference>
<dbReference type="PANTHER" id="PTHR20765">
    <property type="entry name" value="SOLUTE CARRIER FAMILY 43 MEMBER 3-RELATED"/>
    <property type="match status" value="1"/>
</dbReference>
<dbReference type="SUPFAM" id="SSF103473">
    <property type="entry name" value="MFS general substrate transporter"/>
    <property type="match status" value="1"/>
</dbReference>
<reference key="1">
    <citation type="submission" date="1999-06" db="EMBL/GenBank/DDBJ databases">
        <title>Molecular cloning of a human novel gene, FOAP-13, which are highly expressed in macrophages.</title>
        <authorList>
            <person name="Fujii Y."/>
            <person name="Tsuritani K."/>
            <person name="Yajima Y."/>
            <person name="Amemiya T."/>
            <person name="Ukai Y."/>
            <person name="Naito K."/>
            <person name="Kawaguchi A."/>
            <person name="Takayama K."/>
        </authorList>
    </citation>
    <scope>NUCLEOTIDE SEQUENCE [MRNA] (ISOFORM 1)</scope>
    <scope>TISSUE SPECIFICITY</scope>
</reference>
<reference key="2">
    <citation type="journal article" date="2004" name="Nat. Genet.">
        <title>Complete sequencing and characterization of 21,243 full-length human cDNAs.</title>
        <authorList>
            <person name="Ota T."/>
            <person name="Suzuki Y."/>
            <person name="Nishikawa T."/>
            <person name="Otsuki T."/>
            <person name="Sugiyama T."/>
            <person name="Irie R."/>
            <person name="Wakamatsu A."/>
            <person name="Hayashi K."/>
            <person name="Sato H."/>
            <person name="Nagai K."/>
            <person name="Kimura K."/>
            <person name="Makita H."/>
            <person name="Sekine M."/>
            <person name="Obayashi M."/>
            <person name="Nishi T."/>
            <person name="Shibahara T."/>
            <person name="Tanaka T."/>
            <person name="Ishii S."/>
            <person name="Yamamoto J."/>
            <person name="Saito K."/>
            <person name="Kawai Y."/>
            <person name="Isono Y."/>
            <person name="Nakamura Y."/>
            <person name="Nagahari K."/>
            <person name="Murakami K."/>
            <person name="Yasuda T."/>
            <person name="Iwayanagi T."/>
            <person name="Wagatsuma M."/>
            <person name="Shiratori A."/>
            <person name="Sudo H."/>
            <person name="Hosoiri T."/>
            <person name="Kaku Y."/>
            <person name="Kodaira H."/>
            <person name="Kondo H."/>
            <person name="Sugawara M."/>
            <person name="Takahashi M."/>
            <person name="Kanda K."/>
            <person name="Yokoi T."/>
            <person name="Furuya T."/>
            <person name="Kikkawa E."/>
            <person name="Omura Y."/>
            <person name="Abe K."/>
            <person name="Kamihara K."/>
            <person name="Katsuta N."/>
            <person name="Sato K."/>
            <person name="Tanikawa M."/>
            <person name="Yamazaki M."/>
            <person name="Ninomiya K."/>
            <person name="Ishibashi T."/>
            <person name="Yamashita H."/>
            <person name="Murakawa K."/>
            <person name="Fujimori K."/>
            <person name="Tanai H."/>
            <person name="Kimata M."/>
            <person name="Watanabe M."/>
            <person name="Hiraoka S."/>
            <person name="Chiba Y."/>
            <person name="Ishida S."/>
            <person name="Ono Y."/>
            <person name="Takiguchi S."/>
            <person name="Watanabe S."/>
            <person name="Yosida M."/>
            <person name="Hotuta T."/>
            <person name="Kusano J."/>
            <person name="Kanehori K."/>
            <person name="Takahashi-Fujii A."/>
            <person name="Hara H."/>
            <person name="Tanase T.-O."/>
            <person name="Nomura Y."/>
            <person name="Togiya S."/>
            <person name="Komai F."/>
            <person name="Hara R."/>
            <person name="Takeuchi K."/>
            <person name="Arita M."/>
            <person name="Imose N."/>
            <person name="Musashino K."/>
            <person name="Yuuki H."/>
            <person name="Oshima A."/>
            <person name="Sasaki N."/>
            <person name="Aotsuka S."/>
            <person name="Yoshikawa Y."/>
            <person name="Matsunawa H."/>
            <person name="Ichihara T."/>
            <person name="Shiohata N."/>
            <person name="Sano S."/>
            <person name="Moriya S."/>
            <person name="Momiyama H."/>
            <person name="Satoh N."/>
            <person name="Takami S."/>
            <person name="Terashima Y."/>
            <person name="Suzuki O."/>
            <person name="Nakagawa S."/>
            <person name="Senoh A."/>
            <person name="Mizoguchi H."/>
            <person name="Goto Y."/>
            <person name="Shimizu F."/>
            <person name="Wakebe H."/>
            <person name="Hishigaki H."/>
            <person name="Watanabe T."/>
            <person name="Sugiyama A."/>
            <person name="Takemoto M."/>
            <person name="Kawakami B."/>
            <person name="Yamazaki M."/>
            <person name="Watanabe K."/>
            <person name="Kumagai A."/>
            <person name="Itakura S."/>
            <person name="Fukuzumi Y."/>
            <person name="Fujimori Y."/>
            <person name="Komiyama M."/>
            <person name="Tashiro H."/>
            <person name="Tanigami A."/>
            <person name="Fujiwara T."/>
            <person name="Ono T."/>
            <person name="Yamada K."/>
            <person name="Fujii Y."/>
            <person name="Ozaki K."/>
            <person name="Hirao M."/>
            <person name="Ohmori Y."/>
            <person name="Kawabata A."/>
            <person name="Hikiji T."/>
            <person name="Kobatake N."/>
            <person name="Inagaki H."/>
            <person name="Ikema Y."/>
            <person name="Okamoto S."/>
            <person name="Okitani R."/>
            <person name="Kawakami T."/>
            <person name="Noguchi S."/>
            <person name="Itoh T."/>
            <person name="Shigeta K."/>
            <person name="Senba T."/>
            <person name="Matsumura K."/>
            <person name="Nakajima Y."/>
            <person name="Mizuno T."/>
            <person name="Morinaga M."/>
            <person name="Sasaki M."/>
            <person name="Togashi T."/>
            <person name="Oyama M."/>
            <person name="Hata H."/>
            <person name="Watanabe M."/>
            <person name="Komatsu T."/>
            <person name="Mizushima-Sugano J."/>
            <person name="Satoh T."/>
            <person name="Shirai Y."/>
            <person name="Takahashi Y."/>
            <person name="Nakagawa K."/>
            <person name="Okumura K."/>
            <person name="Nagase T."/>
            <person name="Nomura N."/>
            <person name="Kikuchi H."/>
            <person name="Masuho Y."/>
            <person name="Yamashita R."/>
            <person name="Nakai K."/>
            <person name="Yada T."/>
            <person name="Nakamura Y."/>
            <person name="Ohara O."/>
            <person name="Isogai T."/>
            <person name="Sugano S."/>
        </authorList>
    </citation>
    <scope>NUCLEOTIDE SEQUENCE [LARGE SCALE MRNA] (ISOFORM 2)</scope>
    <source>
        <tissue>Lung</tissue>
    </source>
</reference>
<reference key="3">
    <citation type="submission" date="2004-06" db="EMBL/GenBank/DDBJ databases">
        <title>Cloning of human full open reading frames in Gateway(TM) system entry vector (pDONR201).</title>
        <authorList>
            <person name="Ebert L."/>
            <person name="Schick M."/>
            <person name="Neubert P."/>
            <person name="Schatten R."/>
            <person name="Henze S."/>
            <person name="Korn B."/>
        </authorList>
    </citation>
    <scope>NUCLEOTIDE SEQUENCE [LARGE SCALE MRNA] (ISOFORM 1)</scope>
</reference>
<reference key="4">
    <citation type="journal article" date="2005" name="DNA Res.">
        <title>Signal sequence and keyword trap in silico for selection of full-length human cDNAs encoding secretion or membrane proteins from oligo-capped cDNA libraries.</title>
        <authorList>
            <person name="Otsuki T."/>
            <person name="Ota T."/>
            <person name="Nishikawa T."/>
            <person name="Hayashi K."/>
            <person name="Suzuki Y."/>
            <person name="Yamamoto J."/>
            <person name="Wakamatsu A."/>
            <person name="Kimura K."/>
            <person name="Sakamoto K."/>
            <person name="Hatano N."/>
            <person name="Kawai Y."/>
            <person name="Ishii S."/>
            <person name="Saito K."/>
            <person name="Kojima S."/>
            <person name="Sugiyama T."/>
            <person name="Ono T."/>
            <person name="Okano K."/>
            <person name="Yoshikawa Y."/>
            <person name="Aotsuka S."/>
            <person name="Sasaki N."/>
            <person name="Hattori A."/>
            <person name="Okumura K."/>
            <person name="Nagai K."/>
            <person name="Sugano S."/>
            <person name="Isogai T."/>
        </authorList>
    </citation>
    <scope>NUCLEOTIDE SEQUENCE [LARGE SCALE MRNA] (ISOFORM 1)</scope>
</reference>
<reference key="5">
    <citation type="journal article" date="2007" name="BMC Genomics">
        <title>The full-ORF clone resource of the German cDNA consortium.</title>
        <authorList>
            <person name="Bechtel S."/>
            <person name="Rosenfelder H."/>
            <person name="Duda A."/>
            <person name="Schmidt C.P."/>
            <person name="Ernst U."/>
            <person name="Wellenreuther R."/>
            <person name="Mehrle A."/>
            <person name="Schuster C."/>
            <person name="Bahr A."/>
            <person name="Bloecker H."/>
            <person name="Heubner D."/>
            <person name="Hoerlein A."/>
            <person name="Michel G."/>
            <person name="Wedler H."/>
            <person name="Koehrer K."/>
            <person name="Ottenwaelder B."/>
            <person name="Poustka A."/>
            <person name="Wiemann S."/>
            <person name="Schupp I."/>
        </authorList>
    </citation>
    <scope>NUCLEOTIDE SEQUENCE [LARGE SCALE MRNA] (ISOFORM 1)</scope>
    <source>
        <tissue>Melanoma</tissue>
    </source>
</reference>
<reference key="6">
    <citation type="journal article" date="2006" name="Nature">
        <title>Human chromosome 11 DNA sequence and analysis including novel gene identification.</title>
        <authorList>
            <person name="Taylor T.D."/>
            <person name="Noguchi H."/>
            <person name="Totoki Y."/>
            <person name="Toyoda A."/>
            <person name="Kuroki Y."/>
            <person name="Dewar K."/>
            <person name="Lloyd C."/>
            <person name="Itoh T."/>
            <person name="Takeda T."/>
            <person name="Kim D.-W."/>
            <person name="She X."/>
            <person name="Barlow K.F."/>
            <person name="Bloom T."/>
            <person name="Bruford E."/>
            <person name="Chang J.L."/>
            <person name="Cuomo C.A."/>
            <person name="Eichler E."/>
            <person name="FitzGerald M.G."/>
            <person name="Jaffe D.B."/>
            <person name="LaButti K."/>
            <person name="Nicol R."/>
            <person name="Park H.-S."/>
            <person name="Seaman C."/>
            <person name="Sougnez C."/>
            <person name="Yang X."/>
            <person name="Zimmer A.R."/>
            <person name="Zody M.C."/>
            <person name="Birren B.W."/>
            <person name="Nusbaum C."/>
            <person name="Fujiyama A."/>
            <person name="Hattori M."/>
            <person name="Rogers J."/>
            <person name="Lander E.S."/>
            <person name="Sakaki Y."/>
        </authorList>
    </citation>
    <scope>NUCLEOTIDE SEQUENCE [LARGE SCALE GENOMIC DNA]</scope>
</reference>
<reference key="7">
    <citation type="submission" date="2005-07" db="EMBL/GenBank/DDBJ databases">
        <authorList>
            <person name="Mural R.J."/>
            <person name="Istrail S."/>
            <person name="Sutton G.G."/>
            <person name="Florea L."/>
            <person name="Halpern A.L."/>
            <person name="Mobarry C.M."/>
            <person name="Lippert R."/>
            <person name="Walenz B."/>
            <person name="Shatkay H."/>
            <person name="Dew I."/>
            <person name="Miller J.R."/>
            <person name="Flanigan M.J."/>
            <person name="Edwards N.J."/>
            <person name="Bolanos R."/>
            <person name="Fasulo D."/>
            <person name="Halldorsson B.V."/>
            <person name="Hannenhalli S."/>
            <person name="Turner R."/>
            <person name="Yooseph S."/>
            <person name="Lu F."/>
            <person name="Nusskern D.R."/>
            <person name="Shue B.C."/>
            <person name="Zheng X.H."/>
            <person name="Zhong F."/>
            <person name="Delcher A.L."/>
            <person name="Huson D.H."/>
            <person name="Kravitz S.A."/>
            <person name="Mouchard L."/>
            <person name="Reinert K."/>
            <person name="Remington K.A."/>
            <person name="Clark A.G."/>
            <person name="Waterman M.S."/>
            <person name="Eichler E.E."/>
            <person name="Adams M.D."/>
            <person name="Hunkapiller M.W."/>
            <person name="Myers E.W."/>
            <person name="Venter J.C."/>
        </authorList>
    </citation>
    <scope>NUCLEOTIDE SEQUENCE [LARGE SCALE GENOMIC DNA]</scope>
</reference>
<reference key="8">
    <citation type="journal article" date="2004" name="Genome Res.">
        <title>The status, quality, and expansion of the NIH full-length cDNA project: the Mammalian Gene Collection (MGC).</title>
        <authorList>
            <consortium name="The MGC Project Team"/>
        </authorList>
    </citation>
    <scope>NUCLEOTIDE SEQUENCE [LARGE SCALE MRNA] (ISOFORM 1)</scope>
    <source>
        <tissue>Kidney</tissue>
    </source>
</reference>
<reference key="9">
    <citation type="journal article" date="2008" name="Proc. Natl. Acad. Sci. U.S.A.">
        <title>A quantitative atlas of mitotic phosphorylation.</title>
        <authorList>
            <person name="Dephoure N."/>
            <person name="Zhou C."/>
            <person name="Villen J."/>
            <person name="Beausoleil S.A."/>
            <person name="Bakalarski C.E."/>
            <person name="Elledge S.J."/>
            <person name="Gygi S.P."/>
        </authorList>
    </citation>
    <scope>PHOSPHORYLATION [LARGE SCALE ANALYSIS] AT THR-258</scope>
    <scope>IDENTIFICATION BY MASS SPECTROMETRY [LARGE SCALE ANALYSIS]</scope>
    <source>
        <tissue>Cervix carcinoma</tissue>
    </source>
</reference>
<reference key="10">
    <citation type="journal article" date="2010" name="Sci. Signal.">
        <title>Quantitative phosphoproteomics reveals widespread full phosphorylation site occupancy during mitosis.</title>
        <authorList>
            <person name="Olsen J.V."/>
            <person name="Vermeulen M."/>
            <person name="Santamaria A."/>
            <person name="Kumar C."/>
            <person name="Miller M.L."/>
            <person name="Jensen L.J."/>
            <person name="Gnad F."/>
            <person name="Cox J."/>
            <person name="Jensen T.S."/>
            <person name="Nigg E.A."/>
            <person name="Brunak S."/>
            <person name="Mann M."/>
        </authorList>
    </citation>
    <scope>PHOSPHORYLATION [LARGE SCALE ANALYSIS] AT THR-258</scope>
    <scope>IDENTIFICATION BY MASS SPECTROMETRY [LARGE SCALE ANALYSIS]</scope>
    <source>
        <tissue>Cervix carcinoma</tissue>
    </source>
</reference>
<reference key="11">
    <citation type="journal article" date="2013" name="J. Proteome Res.">
        <title>Toward a comprehensive characterization of a human cancer cell phosphoproteome.</title>
        <authorList>
            <person name="Zhou H."/>
            <person name="Di Palma S."/>
            <person name="Preisinger C."/>
            <person name="Peng M."/>
            <person name="Polat A.N."/>
            <person name="Heck A.J."/>
            <person name="Mohammed S."/>
        </authorList>
    </citation>
    <scope>PHOSPHORYLATION [LARGE SCALE ANALYSIS] AT SER-253 AND THR-258</scope>
    <scope>IDENTIFICATION BY MASS SPECTROMETRY [LARGE SCALE ANALYSIS]</scope>
    <source>
        <tissue>Erythroleukemia</tissue>
    </source>
</reference>
<reference key="12">
    <citation type="journal article" date="2015" name="Sci. Rep.">
        <title>Functional identification of SLC43A3 as an equilibrative nucleobase transporter involved in purine salvage in mammals.</title>
        <authorList>
            <person name="Furukawa J."/>
            <person name="Inoue K."/>
            <person name="Maeda J."/>
            <person name="Yasujima T."/>
            <person name="Ohta K."/>
            <person name="Kanai Y."/>
            <person name="Takada T."/>
            <person name="Matsuo H."/>
            <person name="Yuasa H."/>
        </authorList>
    </citation>
    <scope>FUNCTION</scope>
    <scope>TRANSPORT ACTIVITY</scope>
    <scope>ACTIVITY REGULATION</scope>
    <scope>BIOPHYSICOCHEMICAL PROPERTIES</scope>
    <scope>SUBCELLULAR LOCATION</scope>
    <scope>TISSUE SPECIFICITY</scope>
</reference>
<reference key="13">
    <citation type="journal article" date="2019" name="Mol. Pharmacol.">
        <title>Characterization of 6-Mercaptopurine Transport by the SLC43A3-Encoded Nucleobase Transporter.</title>
        <authorList>
            <person name="Ruel N.M."/>
            <person name="Nguyen K.H."/>
            <person name="Vilas G."/>
            <person name="Hammond J.R."/>
        </authorList>
    </citation>
    <scope>FUNCTION (ISOFORMS 1 AND 2)</scope>
    <scope>TRANSPORT ACTIVITY (ISOFORMS 1 AND 2)</scope>
    <scope>BIOPHYSICOCHEMICAL PROPERTIES (ISOFORMS 1 AND 2)</scope>
    <scope>ACTIVITY REGULATION (ISOFORM 1 AND 2)</scope>
</reference>
<reference key="14">
    <citation type="journal article" date="2020" name="J. Pharm. Sci.">
        <title>Functional Analysis of the Role of Equilibrative Nucleobase Transporter 1 (ENBT1/SLC43A3) in Adenine Transport in HepG2 Cells.</title>
        <authorList>
            <person name="Takenaka R."/>
            <person name="Yasujima T."/>
            <person name="Furukawa J."/>
            <person name="Hishikawa Y."/>
            <person name="Yamashiro T."/>
            <person name="Ohta K."/>
            <person name="Inoue K."/>
            <person name="Yuasa H."/>
        </authorList>
    </citation>
    <scope>FUNCTION</scope>
    <scope>ACTIVITY REGULATION</scope>
    <scope>BIOPHYSICOCHEMICAL PROPERTIES</scope>
</reference>
<organism>
    <name type="scientific">Homo sapiens</name>
    <name type="common">Human</name>
    <dbReference type="NCBI Taxonomy" id="9606"/>
    <lineage>
        <taxon>Eukaryota</taxon>
        <taxon>Metazoa</taxon>
        <taxon>Chordata</taxon>
        <taxon>Craniata</taxon>
        <taxon>Vertebrata</taxon>
        <taxon>Euteleostomi</taxon>
        <taxon>Mammalia</taxon>
        <taxon>Eutheria</taxon>
        <taxon>Euarchontoglires</taxon>
        <taxon>Primates</taxon>
        <taxon>Haplorrhini</taxon>
        <taxon>Catarrhini</taxon>
        <taxon>Hominidae</taxon>
        <taxon>Homo</taxon>
    </lineage>
</organism>
<gene>
    <name type="primary">SLC43A3</name>
    <name evidence="8 9" type="synonym">ENBT1</name>
    <name type="ORF">PSEC0252</name>
</gene>
<name>S43A3_HUMAN</name>
<comment type="function">
    <text evidence="1 3 5">Sodium-independent purine-selective nucleobase transporter which mediates the equilibrative transport of extracellular purine nucleobases such as adenine, guanine and hypoxanthine (PubMed:26455426, PubMed:32339528). May regulate fatty acid (FA) transport in adipocytes, acting as a positive regulator of FA efflux and as a negative regulator of FA uptake (By similarity).</text>
</comment>
<comment type="function">
    <molecule>Isoform 1</molecule>
    <text evidence="4">Sodium-independent purine-selective nucleobase transporter which mediates the equilibrative transport of extracellular purine nucleobase adenine (PubMed:30910793). Mediates the influx and efflux of the purine nucleobase analog drug 6-mercaptopurine across the membrane (PubMed:30910793).</text>
</comment>
<comment type="function">
    <molecule>Isoform 2</molecule>
    <text evidence="4">Sodium-independent purine-selective nucleobase transporter which mediates the equilibrative transport of extracellular purine nucleobase adenine (PubMed:30910793). Mediates the influx and efflux of the purine nucleobase analog drug 6-mercaptopurine across the membrane (PubMed:30910793).</text>
</comment>
<comment type="catalytic activity">
    <molecule>Isoform 1</molecule>
    <reaction evidence="4">
        <text>adenine(out) = adenine(in)</text>
        <dbReference type="Rhea" id="RHEA:71523"/>
        <dbReference type="ChEBI" id="CHEBI:16708"/>
    </reaction>
    <physiologicalReaction direction="left-to-right" evidence="12">
        <dbReference type="Rhea" id="RHEA:71524"/>
    </physiologicalReaction>
</comment>
<comment type="catalytic activity">
    <molecule>Isoform 2</molecule>
    <reaction evidence="4">
        <text>adenine(out) = adenine(in)</text>
        <dbReference type="Rhea" id="RHEA:71523"/>
        <dbReference type="ChEBI" id="CHEBI:16708"/>
    </reaction>
    <physiologicalReaction direction="left-to-right" evidence="12">
        <dbReference type="Rhea" id="RHEA:71524"/>
    </physiologicalReaction>
</comment>
<comment type="catalytic activity">
    <reaction evidence="3">
        <text>guanine(out) = guanine(in)</text>
        <dbReference type="Rhea" id="RHEA:71531"/>
        <dbReference type="ChEBI" id="CHEBI:16235"/>
    </reaction>
    <physiologicalReaction direction="left-to-right" evidence="11">
        <dbReference type="Rhea" id="RHEA:71532"/>
    </physiologicalReaction>
</comment>
<comment type="catalytic activity">
    <reaction evidence="3">
        <text>hypoxanthine(out) = hypoxanthine(in)</text>
        <dbReference type="Rhea" id="RHEA:71515"/>
        <dbReference type="ChEBI" id="CHEBI:17368"/>
    </reaction>
    <physiologicalReaction direction="left-to-right" evidence="11">
        <dbReference type="Rhea" id="RHEA:71516"/>
    </physiologicalReaction>
</comment>
<comment type="activity regulation">
    <text evidence="3 5">Adenine transport is strongly inhibited by decynium-22.</text>
</comment>
<comment type="activity regulation">
    <molecule>Isoform 1</molecule>
    <text evidence="4">6-mercaptopurine-transport is inhibited by 6-thioguanine, 6-methylmercaptopurine and decynium-22.</text>
</comment>
<comment type="activity regulation">
    <molecule>Isoform 2</molecule>
    <text evidence="4">6-mercaptopurine-transport is inhibited by 6-thioguanine, 6-methylmercaptopurine and decynium-22.</text>
</comment>
<comment type="biophysicochemical properties">
    <kinetics>
        <KM evidence="3">0.94 uM for adenine</KM>
        <KM evidence="5">0.268 uM for adenine</KM>
        <KM evidence="5">37 uM for adenine (isoform 1)</KM>
        <KM evidence="5">40 uM for adenine (isoform 2)</KM>
        <KM evidence="3">1.7 uM for guanine</KM>
        <KM evidence="3">1.32 uM for hypoxanthine</KM>
        <KM evidence="5">163 uM for 6-mercaptopurine (isoform 1)</KM>
        <KM evidence="5">188 uM for 6-mercaptopurine (isoform 2)</KM>
        <Vmax evidence="3">107.8 pmol/min/mg enzyme for adenine uptake</Vmax>
        <Vmax evidence="5">14.1 pmol/min/mg enzyme for adenine uptake</Vmax>
        <Vmax evidence="4">34.0 pmol/sec/mg enzyme for adenine uptake (isoform 1)</Vmax>
        <Vmax evidence="4">7.9 pmol/sec/mg enzyme for adenine uptake (isoform 2)</Vmax>
        <Vmax evidence="3">98.2 pmol/min/mg enzyme for guanine uptake</Vmax>
        <Vmax evidence="3">73.1 pmol/min/mg enzyme for hypoxanthine uptake</Vmax>
        <Vmax evidence="4">82.0 pmol/sec/mg enzyme for 6-mercaptopurine uptake (isoform 1)</Vmax>
        <Vmax evidence="4">32.0 pmol/sec/mg enzyme for 6-mercaptopurine uptake (isoform 2)</Vmax>
    </kinetics>
</comment>
<comment type="interaction">
    <interactant intactId="EBI-2855542">
        <id>Q8NBI5</id>
    </interactant>
    <interactant intactId="EBI-355164">
        <id>P55072</id>
        <label>VCP</label>
    </interactant>
    <organismsDiffer>false</organismsDiffer>
    <experiments>3</experiments>
</comment>
<comment type="subcellular location">
    <subcellularLocation>
        <location evidence="3">Basolateral cell membrane</location>
        <topology evidence="2">Multi-pass membrane protein</topology>
    </subcellularLocation>
</comment>
<comment type="alternative products">
    <event type="alternative splicing"/>
    <isoform>
        <id>Q8NBI5-1</id>
        <name>1</name>
        <sequence type="displayed"/>
    </isoform>
    <isoform>
        <id>Q8NBI5-2</id>
        <name>2</name>
        <sequence type="described" ref="VSP_055620"/>
    </isoform>
</comment>
<comment type="tissue specificity">
    <text evidence="3 6">Widely expressed with highest levels in the liver and lung, followed by the pancreas (PubMed:26455426). Highly expressed in macrophages (Ref.1).</text>
</comment>
<comment type="similarity">
    <text evidence="10">Belongs to the SLC43A transporter (TC 2.A.1.44) family.</text>
</comment>
<accession>Q8NBI5</accession>
<accession>B4DNR8</accession>
<accession>E7EQD2</accession>
<accession>Q9NSS4</accession>
<proteinExistence type="evidence at protein level"/>
<protein>
    <recommendedName>
        <fullName evidence="8 9">Equilibrative nucleobase transporter 1</fullName>
    </recommendedName>
    <alternativeName>
        <fullName>Protein FOAP-13</fullName>
    </alternativeName>
    <alternativeName>
        <fullName>Solute carrier family 43 member 3</fullName>
    </alternativeName>
</protein>
<evidence type="ECO:0000250" key="1">
    <source>
        <dbReference type="UniProtKB" id="A2AVZ9"/>
    </source>
</evidence>
<evidence type="ECO:0000255" key="2"/>
<evidence type="ECO:0000269" key="3">
    <source>
    </source>
</evidence>
<evidence type="ECO:0000269" key="4">
    <source>
    </source>
</evidence>
<evidence type="ECO:0000269" key="5">
    <source>
    </source>
</evidence>
<evidence type="ECO:0000269" key="6">
    <source ref="1"/>
</evidence>
<evidence type="ECO:0000303" key="7">
    <source>
    </source>
</evidence>
<evidence type="ECO:0000303" key="8">
    <source>
    </source>
</evidence>
<evidence type="ECO:0000303" key="9">
    <source>
    </source>
</evidence>
<evidence type="ECO:0000305" key="10"/>
<evidence type="ECO:0000305" key="11">
    <source>
    </source>
</evidence>
<evidence type="ECO:0000305" key="12">
    <source>
    </source>
</evidence>
<evidence type="ECO:0007744" key="13">
    <source>
    </source>
</evidence>
<evidence type="ECO:0007744" key="14">
    <source>
    </source>
</evidence>
<evidence type="ECO:0007744" key="15">
    <source>
    </source>
</evidence>
<keyword id="KW-0025">Alternative splicing</keyword>
<keyword id="KW-1003">Cell membrane</keyword>
<keyword id="KW-0325">Glycoprotein</keyword>
<keyword id="KW-0445">Lipid transport</keyword>
<keyword id="KW-0472">Membrane</keyword>
<keyword id="KW-0597">Phosphoprotein</keyword>
<keyword id="KW-1267">Proteomics identification</keyword>
<keyword id="KW-1185">Reference proteome</keyword>
<keyword id="KW-0812">Transmembrane</keyword>
<keyword id="KW-1133">Transmembrane helix</keyword>
<keyword id="KW-0813">Transport</keyword>
<sequence>MAGQGLPLHVATLLTGLLECLGFAGVLFGWPSLVFVFKNEDYFKDLCGPDAGPIGNATGQADCKAQDERFSLIFTLGSFMNNFMTFPTGYIFDRFKTTVARLIAIFFYTTATLIIAFTSAGSAVLLFLAMPMLTIGGILFLITNLQIGNLFGQHRSTIITLYNGAFDSSSAVFLIIKLLYEKGISLRASFIFISVCSTWHVARTFLLMPRGHIPYPLPPNYSYGLCPGNGTTKEEKETAEHENRELQSKEFLSAKEETPGAGQKQELRSFWSYAFSRRFAWHLVWLSVIQLWHYLFIGTLNSLLTNMAGGDMARVSTYTNAFAFTQFGVLCAPWNGLLMDRLKQKYQKEARKTGSSTLAVALCSTVPSLALTSLLCLGFALCASVPILPLQYLTFILQVISRSFLYGSNAAFLTLAFPSEHFGKLFGLVMALSAVVSLLQFPIFTLIKGSLQNDPFYVNVMFMLAILLTFFHPFLVYRECRTWKESPSAIA</sequence>